<reference key="1">
    <citation type="journal article" date="2000" name="Nature">
        <title>Complete DNA sequence of a serogroup A strain of Neisseria meningitidis Z2491.</title>
        <authorList>
            <person name="Parkhill J."/>
            <person name="Achtman M."/>
            <person name="James K.D."/>
            <person name="Bentley S.D."/>
            <person name="Churcher C.M."/>
            <person name="Klee S.R."/>
            <person name="Morelli G."/>
            <person name="Basham D."/>
            <person name="Brown D."/>
            <person name="Chillingworth T."/>
            <person name="Davies R.M."/>
            <person name="Davis P."/>
            <person name="Devlin K."/>
            <person name="Feltwell T."/>
            <person name="Hamlin N."/>
            <person name="Holroyd S."/>
            <person name="Jagels K."/>
            <person name="Leather S."/>
            <person name="Moule S."/>
            <person name="Mungall K.L."/>
            <person name="Quail M.A."/>
            <person name="Rajandream M.A."/>
            <person name="Rutherford K.M."/>
            <person name="Simmonds M."/>
            <person name="Skelton J."/>
            <person name="Whitehead S."/>
            <person name="Spratt B.G."/>
            <person name="Barrell B.G."/>
        </authorList>
    </citation>
    <scope>NUCLEOTIDE SEQUENCE [LARGE SCALE GENOMIC DNA]</scope>
    <source>
        <strain>DSM 15465 / Z2491</strain>
    </source>
</reference>
<name>YCIB_NEIMA</name>
<keyword id="KW-0997">Cell inner membrane</keyword>
<keyword id="KW-1003">Cell membrane</keyword>
<keyword id="KW-0472">Membrane</keyword>
<keyword id="KW-0812">Transmembrane</keyword>
<keyword id="KW-1133">Transmembrane helix</keyword>
<sequence length="176" mass="19941">MKFVSDLLSVILFFATYTVTKNMIAATAVALVAGVVQAAFLYWKYKKLDTMQWVGLVLIVVFGGATIVLGDSRFIMWKPSVLFWLGALFLWGSHLAGKNGLKASIGREIQLPDAVWAKLTYMWVGFLIFMGIANWFVFTRFESQWVNYKMFGSTALMLVFFIIQGIYLSTCLKKED</sequence>
<organism>
    <name type="scientific">Neisseria meningitidis serogroup A / serotype 4A (strain DSM 15465 / Z2491)</name>
    <dbReference type="NCBI Taxonomy" id="122587"/>
    <lineage>
        <taxon>Bacteria</taxon>
        <taxon>Pseudomonadati</taxon>
        <taxon>Pseudomonadota</taxon>
        <taxon>Betaproteobacteria</taxon>
        <taxon>Neisseriales</taxon>
        <taxon>Neisseriaceae</taxon>
        <taxon>Neisseria</taxon>
    </lineage>
</organism>
<feature type="chain" id="PRO_0000206536" description="Inner membrane-spanning protein YciB">
    <location>
        <begin position="1"/>
        <end position="176"/>
    </location>
</feature>
<feature type="transmembrane region" description="Helical" evidence="1">
    <location>
        <begin position="23"/>
        <end position="43"/>
    </location>
</feature>
<feature type="transmembrane region" description="Helical" evidence="1">
    <location>
        <begin position="50"/>
        <end position="70"/>
    </location>
</feature>
<feature type="transmembrane region" description="Helical" evidence="1">
    <location>
        <begin position="74"/>
        <end position="94"/>
    </location>
</feature>
<feature type="transmembrane region" description="Helical" evidence="1">
    <location>
        <begin position="119"/>
        <end position="139"/>
    </location>
</feature>
<feature type="transmembrane region" description="Helical" evidence="1">
    <location>
        <begin position="150"/>
        <end position="170"/>
    </location>
</feature>
<evidence type="ECO:0000255" key="1">
    <source>
        <dbReference type="HAMAP-Rule" id="MF_00189"/>
    </source>
</evidence>
<gene>
    <name evidence="1" type="primary">yciB</name>
    <name type="ordered locus">NMA2145</name>
</gene>
<protein>
    <recommendedName>
        <fullName evidence="1">Inner membrane-spanning protein YciB</fullName>
    </recommendedName>
</protein>
<dbReference type="EMBL" id="AL157959">
    <property type="protein sequence ID" value="CAM09242.1"/>
    <property type="molecule type" value="Genomic_DNA"/>
</dbReference>
<dbReference type="RefSeq" id="WP_002212347.1">
    <property type="nucleotide sequence ID" value="NC_003116.1"/>
</dbReference>
<dbReference type="EnsemblBacteria" id="CAM09242">
    <property type="protein sequence ID" value="CAM09242"/>
    <property type="gene ID" value="NMA2145"/>
</dbReference>
<dbReference type="KEGG" id="nma:NMA2145"/>
<dbReference type="HOGENOM" id="CLU_089554_2_0_4"/>
<dbReference type="Proteomes" id="UP000000626">
    <property type="component" value="Chromosome"/>
</dbReference>
<dbReference type="GO" id="GO:0005886">
    <property type="term" value="C:plasma membrane"/>
    <property type="evidence" value="ECO:0007669"/>
    <property type="project" value="UniProtKB-SubCell"/>
</dbReference>
<dbReference type="HAMAP" id="MF_00189">
    <property type="entry name" value="YciB"/>
    <property type="match status" value="1"/>
</dbReference>
<dbReference type="InterPro" id="IPR006008">
    <property type="entry name" value="YciB"/>
</dbReference>
<dbReference type="NCBIfam" id="TIGR00997">
    <property type="entry name" value="ispZ"/>
    <property type="match status" value="1"/>
</dbReference>
<dbReference type="NCBIfam" id="NF001325">
    <property type="entry name" value="PRK00259.1-3"/>
    <property type="match status" value="1"/>
</dbReference>
<dbReference type="PANTHER" id="PTHR36917:SF1">
    <property type="entry name" value="INNER MEMBRANE-SPANNING PROTEIN YCIB"/>
    <property type="match status" value="1"/>
</dbReference>
<dbReference type="PANTHER" id="PTHR36917">
    <property type="entry name" value="INTRACELLULAR SEPTATION PROTEIN A-RELATED"/>
    <property type="match status" value="1"/>
</dbReference>
<dbReference type="Pfam" id="PF04279">
    <property type="entry name" value="IspA"/>
    <property type="match status" value="1"/>
</dbReference>
<accession>P65195</accession>
<accession>A1ITX3</accession>
<accession>Q9JR24</accession>
<proteinExistence type="inferred from homology"/>
<comment type="function">
    <text evidence="1">Plays a role in cell envelope biogenesis, maintenance of cell envelope integrity and membrane homeostasis.</text>
</comment>
<comment type="subcellular location">
    <subcellularLocation>
        <location evidence="1">Cell inner membrane</location>
        <topology evidence="1">Multi-pass membrane protein</topology>
    </subcellularLocation>
</comment>
<comment type="similarity">
    <text evidence="1">Belongs to the YciB family.</text>
</comment>